<organismHost>
    <name type="scientific">Homo sapiens</name>
    <name type="common">Human</name>
    <dbReference type="NCBI Taxonomy" id="9606"/>
</organismHost>
<dbReference type="EMBL" id="K02011">
    <property type="protein sequence ID" value="AAA44661.1"/>
    <property type="molecule type" value="Genomic_RNA"/>
</dbReference>
<dbReference type="PDB" id="1DDH">
    <property type="method" value="X-ray"/>
    <property type="resolution" value="3.10 A"/>
    <property type="chains" value="P=311-320"/>
</dbReference>
<dbReference type="PDB" id="1HHG">
    <property type="method" value="X-ray"/>
    <property type="resolution" value="2.60 A"/>
    <property type="chains" value="C/F=192-200"/>
</dbReference>
<dbReference type="PDB" id="1QO3">
    <property type="method" value="X-ray"/>
    <property type="resolution" value="2.30 A"/>
    <property type="chains" value="P=311-320"/>
</dbReference>
<dbReference type="PDB" id="1SZT">
    <property type="method" value="X-ray"/>
    <property type="resolution" value="2.40 A"/>
    <property type="chains" value="A=541-650"/>
</dbReference>
<dbReference type="PDB" id="6TVU">
    <property type="method" value="X-ray"/>
    <property type="resolution" value="1.25 A"/>
    <property type="chains" value="BBB=616-645"/>
</dbReference>
<dbReference type="PDBsum" id="1DDH"/>
<dbReference type="PDBsum" id="1HHG"/>
<dbReference type="PDBsum" id="1QO3"/>
<dbReference type="PDBsum" id="1SZT"/>
<dbReference type="PDBsum" id="6TVU"/>
<dbReference type="BMRB" id="P04582"/>
<dbReference type="SMR" id="P04582"/>
<dbReference type="IntAct" id="P04582">
    <property type="interactions" value="2"/>
</dbReference>
<dbReference type="GlyConnect" id="149">
    <property type="glycosylation" value="1 N-Linked glycan"/>
</dbReference>
<dbReference type="GlyCosmos" id="P04582">
    <property type="glycosylation" value="27 sites, 2 glycans"/>
</dbReference>
<dbReference type="Reactome" id="R-HSA-5621480">
    <property type="pathway name" value="Dectin-2 family"/>
</dbReference>
<dbReference type="EvolutionaryTrace" id="P04582"/>
<dbReference type="GO" id="GO:0044175">
    <property type="term" value="C:host cell endosome membrane"/>
    <property type="evidence" value="ECO:0007669"/>
    <property type="project" value="UniProtKB-SubCell"/>
</dbReference>
<dbReference type="GO" id="GO:0020002">
    <property type="term" value="C:host cell plasma membrane"/>
    <property type="evidence" value="ECO:0007669"/>
    <property type="project" value="UniProtKB-SubCell"/>
</dbReference>
<dbReference type="GO" id="GO:0016020">
    <property type="term" value="C:membrane"/>
    <property type="evidence" value="ECO:0007669"/>
    <property type="project" value="UniProtKB-UniRule"/>
</dbReference>
<dbReference type="GO" id="GO:0019031">
    <property type="term" value="C:viral envelope"/>
    <property type="evidence" value="ECO:0007669"/>
    <property type="project" value="UniProtKB-KW"/>
</dbReference>
<dbReference type="GO" id="GO:0055036">
    <property type="term" value="C:virion membrane"/>
    <property type="evidence" value="ECO:0007669"/>
    <property type="project" value="UniProtKB-SubCell"/>
</dbReference>
<dbReference type="GO" id="GO:0005198">
    <property type="term" value="F:structural molecule activity"/>
    <property type="evidence" value="ECO:0007669"/>
    <property type="project" value="UniProtKB-UniRule"/>
</dbReference>
<dbReference type="GO" id="GO:0075512">
    <property type="term" value="P:clathrin-dependent endocytosis of virus by host cell"/>
    <property type="evidence" value="ECO:0007669"/>
    <property type="project" value="UniProtKB-UniRule"/>
</dbReference>
<dbReference type="GO" id="GO:0039654">
    <property type="term" value="P:fusion of virus membrane with host endosome membrane"/>
    <property type="evidence" value="ECO:0007669"/>
    <property type="project" value="UniProtKB-UniRule"/>
</dbReference>
<dbReference type="GO" id="GO:0019064">
    <property type="term" value="P:fusion of virus membrane with host plasma membrane"/>
    <property type="evidence" value="ECO:0007669"/>
    <property type="project" value="UniProtKB-UniRule"/>
</dbReference>
<dbReference type="GO" id="GO:1903908">
    <property type="term" value="P:positive regulation of plasma membrane raft polarization"/>
    <property type="evidence" value="ECO:0007669"/>
    <property type="project" value="UniProtKB-UniRule"/>
</dbReference>
<dbReference type="GO" id="GO:1903911">
    <property type="term" value="P:positive regulation of receptor clustering"/>
    <property type="evidence" value="ECO:0007669"/>
    <property type="project" value="UniProtKB-UniRule"/>
</dbReference>
<dbReference type="GO" id="GO:0019082">
    <property type="term" value="P:viral protein processing"/>
    <property type="evidence" value="ECO:0007669"/>
    <property type="project" value="UniProtKB-UniRule"/>
</dbReference>
<dbReference type="GO" id="GO:0019062">
    <property type="term" value="P:virion attachment to host cell"/>
    <property type="evidence" value="ECO:0007669"/>
    <property type="project" value="UniProtKB-UniRule"/>
</dbReference>
<dbReference type="CDD" id="cd09909">
    <property type="entry name" value="HIV-1-like_HR1-HR2"/>
    <property type="match status" value="1"/>
</dbReference>
<dbReference type="FunFam" id="1.10.287.210:FF:000001">
    <property type="entry name" value="Envelope glycoprotein gp160"/>
    <property type="match status" value="1"/>
</dbReference>
<dbReference type="FunFam" id="1.20.5.490:FF:000001">
    <property type="entry name" value="Envelope glycoprotein gp160"/>
    <property type="match status" value="1"/>
</dbReference>
<dbReference type="FunFam" id="2.170.40.20:FF:000001">
    <property type="entry name" value="Envelope glycoprotein gp160"/>
    <property type="match status" value="1"/>
</dbReference>
<dbReference type="FunFam" id="2.170.40.20:FF:000003">
    <property type="entry name" value="Envelope glycoprotein gp160"/>
    <property type="match status" value="1"/>
</dbReference>
<dbReference type="Gene3D" id="1.10.287.210">
    <property type="match status" value="1"/>
</dbReference>
<dbReference type="Gene3D" id="2.170.40.20">
    <property type="entry name" value="Human immunodeficiency virus 1, Gp160, envelope glycoprotein"/>
    <property type="match status" value="2"/>
</dbReference>
<dbReference type="Gene3D" id="1.20.5.490">
    <property type="entry name" value="Single helix bin"/>
    <property type="match status" value="1"/>
</dbReference>
<dbReference type="HAMAP" id="MF_04083">
    <property type="entry name" value="HIV_ENV"/>
    <property type="match status" value="1"/>
</dbReference>
<dbReference type="InterPro" id="IPR036377">
    <property type="entry name" value="Gp120_core_sf"/>
</dbReference>
<dbReference type="InterPro" id="IPR037527">
    <property type="entry name" value="Gp160"/>
</dbReference>
<dbReference type="InterPro" id="IPR000328">
    <property type="entry name" value="GP41-like"/>
</dbReference>
<dbReference type="InterPro" id="IPR000777">
    <property type="entry name" value="HIV1_Gp120"/>
</dbReference>
<dbReference type="Pfam" id="PF00516">
    <property type="entry name" value="GP120"/>
    <property type="match status" value="1"/>
</dbReference>
<dbReference type="Pfam" id="PF00517">
    <property type="entry name" value="GP41"/>
    <property type="match status" value="1"/>
</dbReference>
<dbReference type="SUPFAM" id="SSF56502">
    <property type="entry name" value="gp120 core"/>
    <property type="match status" value="1"/>
</dbReference>
<dbReference type="SUPFAM" id="SSF58069">
    <property type="entry name" value="Virus ectodomain"/>
    <property type="match status" value="1"/>
</dbReference>
<keyword id="KW-0002">3D-structure</keyword>
<keyword id="KW-0014">AIDS</keyword>
<keyword id="KW-0053">Apoptosis</keyword>
<keyword id="KW-1165">Clathrin-mediated endocytosis of virus by host</keyword>
<keyword id="KW-0165">Cleavage on pair of basic residues</keyword>
<keyword id="KW-0175">Coiled coil</keyword>
<keyword id="KW-1015">Disulfide bond</keyword>
<keyword id="KW-1170">Fusion of virus membrane with host endosomal membrane</keyword>
<keyword id="KW-1168">Fusion of virus membrane with host membrane</keyword>
<keyword id="KW-0325">Glycoprotein</keyword>
<keyword id="KW-1032">Host cell membrane</keyword>
<keyword id="KW-1039">Host endosome</keyword>
<keyword id="KW-1043">Host membrane</keyword>
<keyword id="KW-0945">Host-virus interaction</keyword>
<keyword id="KW-0449">Lipoprotein</keyword>
<keyword id="KW-0472">Membrane</keyword>
<keyword id="KW-0564">Palmitate</keyword>
<keyword id="KW-0732">Signal</keyword>
<keyword id="KW-0812">Transmembrane</keyword>
<keyword id="KW-1133">Transmembrane helix</keyword>
<keyword id="KW-1161">Viral attachment to host cell</keyword>
<keyword id="KW-0261">Viral envelope protein</keyword>
<keyword id="KW-0899">Viral immunoevasion</keyword>
<keyword id="KW-1162">Viral penetration into host cytoplasm</keyword>
<keyword id="KW-0946">Virion</keyword>
<keyword id="KW-1164">Virus endocytosis by host</keyword>
<keyword id="KW-1160">Virus entry into host cell</keyword>
<feature type="signal peptide" evidence="1">
    <location>
        <begin position="1"/>
        <end position="32"/>
    </location>
</feature>
<feature type="chain" id="PRO_0000239472" description="Envelope glycoprotein gp160" evidence="1">
    <location>
        <begin position="33"/>
        <end position="851"/>
    </location>
</feature>
<feature type="chain" id="PRO_0000038384" description="Surface protein gp120" evidence="1">
    <location>
        <begin position="33"/>
        <end position="506"/>
    </location>
</feature>
<feature type="chain" id="PRO_0000038385" description="Transmembrane protein gp41" evidence="1">
    <location>
        <begin position="507"/>
        <end position="851"/>
    </location>
</feature>
<feature type="topological domain" description="Extracellular" evidence="1">
    <location>
        <begin position="33"/>
        <end position="679"/>
    </location>
</feature>
<feature type="transmembrane region" description="Helical" evidence="1">
    <location>
        <begin position="680"/>
        <end position="700"/>
    </location>
</feature>
<feature type="topological domain" description="Cytoplasmic" evidence="1">
    <location>
        <begin position="701"/>
        <end position="851"/>
    </location>
</feature>
<feature type="region of interest" description="V1" evidence="1">
    <location>
        <begin position="131"/>
        <end position="156"/>
    </location>
</feature>
<feature type="region of interest" description="V2" evidence="1">
    <location>
        <begin position="157"/>
        <end position="196"/>
    </location>
</feature>
<feature type="region of interest" description="V3" evidence="1">
    <location>
        <begin position="296"/>
        <end position="330"/>
    </location>
</feature>
<feature type="region of interest" description="CD4-binding loop" evidence="1">
    <location>
        <begin position="364"/>
        <end position="374"/>
    </location>
</feature>
<feature type="region of interest" description="V4" evidence="1">
    <location>
        <begin position="385"/>
        <end position="413"/>
    </location>
</feature>
<feature type="region of interest" description="V5">
    <location>
        <begin position="456"/>
        <end position="466"/>
    </location>
</feature>
<feature type="region of interest" description="V5" evidence="1">
    <location>
        <begin position="458"/>
        <end position="466"/>
    </location>
</feature>
<feature type="region of interest" description="Fusion peptide" evidence="1">
    <location>
        <begin position="507"/>
        <end position="527"/>
    </location>
</feature>
<feature type="region of interest" description="Immunosuppression" evidence="1">
    <location>
        <begin position="569"/>
        <end position="587"/>
    </location>
</feature>
<feature type="region of interest" description="MPER; binding to GalCer" evidence="1">
    <location>
        <begin position="657"/>
        <end position="678"/>
    </location>
</feature>
<feature type="region of interest" description="Disordered" evidence="2">
    <location>
        <begin position="713"/>
        <end position="735"/>
    </location>
</feature>
<feature type="coiled-coil region" evidence="1">
    <location>
        <begin position="628"/>
        <end position="662"/>
    </location>
</feature>
<feature type="short sequence motif" description="YXXL motif; contains endocytosis signal" evidence="1">
    <location>
        <begin position="707"/>
        <end position="710"/>
    </location>
</feature>
<feature type="short sequence motif" description="Di-leucine internalization motif" evidence="1">
    <location>
        <begin position="850"/>
        <end position="851"/>
    </location>
</feature>
<feature type="site" description="Cleavage; by host furin" evidence="1">
    <location>
        <begin position="506"/>
        <end position="507"/>
    </location>
</feature>
<feature type="lipid moiety-binding region" description="S-palmitoyl cysteine; by host" evidence="1">
    <location>
        <position position="759"/>
    </location>
</feature>
<feature type="glycosylation site" description="N-linked (GlcNAc...) asparagine; by host" evidence="1">
    <location>
        <position position="88"/>
    </location>
</feature>
<feature type="glycosylation site" description="N-linked (GlcNAc...) asparagine; by host" evidence="1">
    <location>
        <position position="136"/>
    </location>
</feature>
<feature type="glycosylation site" description="N-linked (GlcNAc...) asparagine; by host" evidence="1">
    <location>
        <position position="141"/>
    </location>
</feature>
<feature type="glycosylation site" description="N-linked (GlcNAc...) asparagine; by host" evidence="1">
    <location>
        <position position="156"/>
    </location>
</feature>
<feature type="glycosylation site" description="N-linked (GlcNAc...) asparagine; by host" evidence="1">
    <location>
        <position position="160"/>
    </location>
</feature>
<feature type="glycosylation site" description="N-linked (GlcNAc...) asparagine; by host" evidence="1">
    <location>
        <position position="186"/>
    </location>
</feature>
<feature type="glycosylation site" description="N-linked (GlcNAc...) asparagine; by host" evidence="1">
    <location>
        <position position="197"/>
    </location>
</feature>
<feature type="glycosylation site" description="N-linked (GlcNAc...) asparagine; by host" evidence="1">
    <location>
        <position position="230"/>
    </location>
</feature>
<feature type="glycosylation site" description="N-linked (GlcNAc...) asparagine; by host" evidence="1">
    <location>
        <position position="234"/>
    </location>
</feature>
<feature type="glycosylation site" description="N-linked (GlcNAc...) asparagine; by host" evidence="1">
    <location>
        <position position="241"/>
    </location>
</feature>
<feature type="glycosylation site" description="N-linked (GlcNAc...) asparagine; by host" evidence="1">
    <location>
        <position position="262"/>
    </location>
</feature>
<feature type="glycosylation site" description="N-linked (GlcNAc...) asparagine; by host" evidence="1">
    <location>
        <position position="276"/>
    </location>
</feature>
<feature type="glycosylation site" description="N-linked (GlcNAc...) asparagine; by host" evidence="1">
    <location>
        <position position="295"/>
    </location>
</feature>
<feature type="glycosylation site" description="N-linked (GlcNAc...) asparagine; by host" evidence="1">
    <location>
        <position position="301"/>
    </location>
</feature>
<feature type="glycosylation site" description="N-linked (GlcNAc...) asparagine; by host" evidence="1">
    <location>
        <position position="332"/>
    </location>
</feature>
<feature type="glycosylation site" description="N-linked (GlcNAc...) asparagine; by host" evidence="1">
    <location>
        <position position="339"/>
    </location>
</feature>
<feature type="glycosylation site" description="N-linked (GlcNAc...) asparagine; by host" evidence="1">
    <location>
        <position position="356"/>
    </location>
</feature>
<feature type="glycosylation site" description="N-linked (GlcNAc...) asparagine; by host" evidence="1">
    <location>
        <position position="386"/>
    </location>
</feature>
<feature type="glycosylation site" description="N-linked (GlcNAc...) asparagine; by host" evidence="1">
    <location>
        <position position="392"/>
    </location>
</feature>
<feature type="glycosylation site" description="N-linked (GlcNAc...) asparagine; by host" evidence="1">
    <location>
        <position position="401"/>
    </location>
</feature>
<feature type="glycosylation site" description="N-linked (GlcNAc...) asparagine; by host" evidence="1">
    <location>
        <position position="443"/>
    </location>
</feature>
<feature type="glycosylation site" description="N-linked (GlcNAc...) asparagine; by host" evidence="1">
    <location>
        <position position="458"/>
    </location>
</feature>
<feature type="glycosylation site" description="N-linked (GlcNAc...) asparagine; by host" evidence="1">
    <location>
        <position position="606"/>
    </location>
</feature>
<feature type="glycosylation site" description="N-linked (GlcNAc...) asparagine; by host" evidence="1">
    <location>
        <position position="611"/>
    </location>
</feature>
<feature type="glycosylation site" description="N-linked (GlcNAc...) asparagine; by host" evidence="1">
    <location>
        <position position="620"/>
    </location>
</feature>
<feature type="glycosylation site" description="N-linked (GlcNAc...) asparagine; by host" evidence="1">
    <location>
        <position position="632"/>
    </location>
</feature>
<feature type="glycosylation site" description="N-linked (GlcNAc...) asparagine; by host" evidence="1">
    <location>
        <position position="669"/>
    </location>
</feature>
<feature type="disulfide bond" evidence="1">
    <location>
        <begin position="54"/>
        <end position="74"/>
    </location>
</feature>
<feature type="disulfide bond" evidence="1">
    <location>
        <begin position="119"/>
        <end position="205"/>
    </location>
</feature>
<feature type="disulfide bond" evidence="1">
    <location>
        <begin position="126"/>
        <end position="196"/>
    </location>
</feature>
<feature type="disulfide bond" evidence="1">
    <location>
        <begin position="131"/>
        <end position="157"/>
    </location>
</feature>
<feature type="disulfide bond" evidence="1">
    <location>
        <begin position="218"/>
        <end position="247"/>
    </location>
</feature>
<feature type="disulfide bond" evidence="1">
    <location>
        <begin position="228"/>
        <end position="239"/>
    </location>
</feature>
<feature type="disulfide bond" evidence="1">
    <location>
        <begin position="296"/>
        <end position="331"/>
    </location>
</feature>
<feature type="disulfide bond" evidence="1">
    <location>
        <begin position="378"/>
        <end position="440"/>
    </location>
</feature>
<feature type="disulfide bond" evidence="1">
    <location>
        <begin position="385"/>
        <end position="413"/>
    </location>
</feature>
<feature type="disulfide bond" evidence="1">
    <location>
        <begin position="593"/>
        <end position="599"/>
    </location>
</feature>
<proteinExistence type="evidence at protein level"/>
<comment type="function">
    <molecule>Envelope glycoprotein gp160</molecule>
    <text evidence="1">Oligomerizes in the host endoplasmic reticulum into predominantly trimers. In a second time, gp160 transits in the host Golgi, where glycosylation is completed. The precursor is then proteolytically cleaved in the trans-Golgi and thereby activated by cellular furin or furin-like proteases to produce gp120 and gp41.</text>
</comment>
<comment type="function">
    <molecule>Surface protein gp120</molecule>
    <text evidence="1">Attaches the virus to the host lymphoid cell by binding to the primary receptor CD4. This interaction induces a structural rearrangement creating a high affinity binding site for a chemokine coreceptor like CXCR4 and/or CCR5. Acts as a ligand for CD209/DC-SIGN and CLEC4M/DC-SIGNR, which are respectively found on dendritic cells (DCs), and on endothelial cells of liver sinusoids and lymph node sinuses. These interactions allow capture of viral particles at mucosal surfaces by these cells and subsequent transmission to permissive cells. HIV subverts the migration properties of dendritic cells to gain access to CD4+ T-cells in lymph nodes. Virus transmission to permissive T-cells occurs either in trans (without DCs infection, through viral capture and transmission), or in cis (following DCs productive infection, through the usual CD4-gp120 interaction), thereby inducing a robust infection. In trans infection, bound virions remain infectious over days and it is proposed that they are not degraded, but protected in non-lysosomal acidic organelles within the DCs close to the cell membrane thus contributing to the viral infectious potential during DCs' migration from the periphery to the lymphoid tissues. On arrival at lymphoid tissues, intact virions recycle back to DCs' cell surface allowing virus transmission to CD4+ T-cells.</text>
</comment>
<comment type="function">
    <molecule>Transmembrane protein gp41</molecule>
    <text evidence="1">Acts as a class I viral fusion protein. Under the current model, the protein has at least 3 conformational states: pre-fusion native state, pre-hairpin intermediate state, and post-fusion hairpin state. During fusion of viral and target intracellular membranes, the coiled coil regions (heptad repeats) assume a trimer-of-hairpins structure, positioning the fusion peptide in close proximity to the C-terminal region of the ectodomain. The formation of this structure appears to drive apposition and subsequent fusion of viral and target cell membranes. Complete fusion occurs in host cell endosomes and is dynamin-dependent, however some lipid transfer might occur at the plasma membrane. The virus undergoes clathrin-dependent internalization long before endosomal fusion, thus minimizing the surface exposure of conserved viral epitopes during fusion and reducing the efficacy of inhibitors targeting these epitopes. Membranes fusion leads to delivery of the nucleocapsid into the cytoplasm.</text>
</comment>
<comment type="subunit">
    <molecule>Surface protein gp120</molecule>
    <text evidence="1">The mature envelope protein (Env) consists of a homotrimer of non-covalently associated gp120-gp41 heterodimers. The resulting complex protrudes from the virus surface as a spike. There seems to be as few as 10 spikes on the average virion. Interacts with host CD4, CCR5 and CXCR4. Gp120 also interacts with the C-type lectins CD209/DC-SIGN and CLEC4M/DC-SIGNR (collectively referred to as DC-SIGN(R)). Gp120 and gp41 interact with GalCer. Gp120 interacts with host ITGA4/ITGB7 complex; on CD4+ T-cells, this interaction results in rapid activation of integrin ITGAL/LFA-1, which facilitates efficient cell-to-cell spreading of HIV-1. Gp120 interacts with cell-associated heparan sulfate; this interaction increases virus infectivity on permissive cells and may be involved in infection of CD4- cells.</text>
</comment>
<comment type="subunit">
    <molecule>Transmembrane protein gp41</molecule>
    <text evidence="1">The mature envelope protein (Env) consists of a homotrimer of non-covalently associated gp120-gp41 heterodimers. The resulting complex protrudes from the virus surface as a spike. There seems to be as few as 10 spikes on the average virion.</text>
</comment>
<comment type="subcellular location">
    <molecule>Surface protein gp120</molecule>
    <subcellularLocation>
        <location evidence="1">Virion membrane</location>
        <topology evidence="1">Peripheral membrane protein</topology>
    </subcellularLocation>
    <subcellularLocation>
        <location evidence="1">Host cell membrane</location>
        <topology evidence="1">Peripheral membrane protein</topology>
    </subcellularLocation>
    <subcellularLocation>
        <location evidence="1">Host endosome membrane</location>
        <topology evidence="1">Single-pass type I membrane protein</topology>
    </subcellularLocation>
    <text evidence="1">The surface protein is not anchored to the viral envelope, but associates with the extravirion surface through its binding to TM. It is probably concentrated at the site of budding and incorporated into the virions possibly by contacts between the cytoplasmic tail of Env and the N-terminus of Gag.</text>
</comment>
<comment type="subcellular location">
    <molecule>Transmembrane protein gp41</molecule>
    <subcellularLocation>
        <location evidence="1">Virion membrane</location>
        <topology evidence="1">Single-pass type I membrane protein</topology>
    </subcellularLocation>
    <subcellularLocation>
        <location evidence="1">Host cell membrane</location>
        <topology evidence="1">Single-pass type I membrane protein</topology>
    </subcellularLocation>
    <subcellularLocation>
        <location evidence="1">Host endosome membrane</location>
        <topology evidence="1">Single-pass type I membrane protein</topology>
    </subcellularLocation>
    <text evidence="1">It is probably concentrated at the site of budding and incorporated into the virions possibly by contacts between the cytoplasmic tail of Env and the N-terminus of Gag.</text>
</comment>
<comment type="domain">
    <text evidence="1">Some of the most genetically diverse regions of the viral genome are present in Env. They are called variable regions 1 through 5 (V1 through V5). Coreceptor usage of gp120 is determined mainly by the primary structure of the third variable region (V3) in the outer domain of gp120. The sequence of V3 determines which coreceptor, CCR5 and/or CXCR4 (corresponding to R5/macrophage, X4/T cell and R5X4/T cell and macrophage tropism), is used to trigger the fusion potential of the Env complex, and hence which cells the virus can infect. Binding to CCR5 involves a region adjacent in addition to V3.</text>
</comment>
<comment type="domain">
    <text evidence="1">The membrane proximal external region (MPER) present in gp41 is a tryptophan-rich region recognized by the antibodies 2F5, Z13, and 4E10. MPER seems to play a role in fusion.</text>
</comment>
<comment type="domain">
    <text evidence="1">The 17 amino acids long immunosuppressive region is present in many retroviral envelope proteins. Synthetic peptides derived from this relatively conserved sequence inhibit immune function in vitro and in vivo.</text>
</comment>
<comment type="domain">
    <text evidence="1">The YXXL motif is involved in determining the exact site of viral release at the surface of infected mononuclear cells and promotes endocytosis. YXXL and di-leucine endocytosis motifs interact directly or indirectly with the clathrin adapter complexes, opperate independently, and their activities are not additive.</text>
</comment>
<comment type="domain">
    <text evidence="1">The CD4-binding region is targeted by the antibody b12.</text>
</comment>
<comment type="PTM">
    <text evidence="1">Highly glycosylated by host. The high number of glycan on the protein is reffered to as 'glycan shield' because it contributes to hide protein sequence from adaptive immune system.</text>
</comment>
<comment type="PTM">
    <text evidence="1">Palmitoylation of the transmembrane protein and of Env polyprotein (prior to its proteolytic cleavage) is essential for their association with host cell membrane lipid rafts. Palmitoylation is therefore required for envelope trafficking to classical lipid rafts, but not for viral replication.</text>
</comment>
<comment type="PTM">
    <text evidence="1">Specific enzymatic cleavages in vivo yield mature proteins. Envelope glycoproteins are synthesized as an inactive precursor that is heavily N-glycosylated and processed likely by host cell furin in the Golgi to yield the mature SU and TM proteins. The cleavage site between SU and TM requires the minimal sequence [KR]-X-[KR]-R. About 2 of the 9 disulfide bonds of gp41 are reduced by P4HB/PDI, following binding to CD4 receptor.</text>
</comment>
<comment type="miscellaneous">
    <text evidence="1">Inhibitors targeting HIV-1 viral envelope proteins are used as antiretroviral drugs. Attachment of virions to the cell surface via non-specific interactions and CD4 binding can be blocked by inhibitors that include cyanovirin-N, cyclotriazadisulfonamide analogs, PRO 2000, TNX 355 and PRO 542. In addition, BMS 806 can block CD4-induced conformational changes. Env interactions with the coreceptor molecules can be targeted by CCR5 antagonists including SCH-D, maraviroc (UK 427857) and aplaviroc (GW 873140), and the CXCR4 antagonist AMD 070. Fusion of viral and cellular membranes can be inhibited by peptides such as enfuvirtide and tifuvirtide (T 1249). Resistance to inhibitors associated with mutations in Env are observed. Most of the time, single mutations confer only a modest reduction in drug susceptibility. Combination of several mutations is usually required to develop a high-level drug resistance.</text>
</comment>
<comment type="miscellaneous">
    <text evidence="1">HIV-1 lineages are divided in three main groups, M (for Major), O (for Outlier), and N (for New, or Non-M, Non-O). The vast majority of strains found worldwide belong to the group M. Group O seems to be endemic to and largely confined to Cameroon and neighboring countries in West Central Africa, where these viruses represent a small minority of HIV-1 strains. The group N is represented by a limited number of isolates from Cameroonian persons. The group M is further subdivided in 9 clades or subtypes (A to D, F to H, J and K).</text>
</comment>
<comment type="similarity">
    <text evidence="1">Belongs to the HIV-1 env protein family.</text>
</comment>
<comment type="online information" name="hivdb">
    <link uri="https://hivdb.stanford.edu"/>
    <text>HIV drug resistance database</text>
</comment>
<comment type="online information" name="HIV drug resistance mutations">
    <link uri="https://www.iasusa.org/hiv-drug-resistance/hiv-drug-resistance-mutations/"/>
</comment>
<accession>P04582</accession>
<name>ENV_HV1B8</name>
<organism>
    <name type="scientific">Human immunodeficiency virus type 1 group M subtype B (isolate BH8)</name>
    <name type="common">HIV-1</name>
    <dbReference type="NCBI Taxonomy" id="11684"/>
    <lineage>
        <taxon>Viruses</taxon>
        <taxon>Riboviria</taxon>
        <taxon>Pararnavirae</taxon>
        <taxon>Artverviricota</taxon>
        <taxon>Revtraviricetes</taxon>
        <taxon>Ortervirales</taxon>
        <taxon>Retroviridae</taxon>
        <taxon>Orthoretrovirinae</taxon>
        <taxon>Lentivirus</taxon>
        <taxon>Human immunodeficiency virus type 1</taxon>
    </lineage>
</organism>
<protein>
    <recommendedName>
        <fullName evidence="1">Envelope glycoprotein gp160</fullName>
    </recommendedName>
    <alternativeName>
        <fullName evidence="1">Env polyprotein</fullName>
    </alternativeName>
    <component>
        <recommendedName>
            <fullName evidence="1">Surface protein gp120</fullName>
            <shortName evidence="1">SU</shortName>
        </recommendedName>
        <alternativeName>
            <fullName evidence="1">Glycoprotein 120</fullName>
            <shortName evidence="1">gp120</shortName>
        </alternativeName>
    </component>
    <component>
        <recommendedName>
            <fullName evidence="1">Transmembrane protein gp41</fullName>
            <shortName evidence="1">TM</shortName>
        </recommendedName>
        <alternativeName>
            <fullName evidence="1">Glycoprotein 41</fullName>
            <shortName evidence="1">gp41</shortName>
        </alternativeName>
    </component>
</protein>
<sequence>MRVKEKYQHLWRWGWRWGTMLLGMLMICSATEKLWVTVYFGVPVWKEATTTLFCASDAKAYDTEVHNVWATHACVPTDPNPQEVVLVNVTENFNMWKNDMVEQMHEDIISLWDQSLKPCVKLTPLCVSLKCTDLKNDTNTNSSSGRMIMEKGEIKNCSFNISTSKRGKVQKEYAFFYKLDIIPIDNDTTSYTLTSCNTSVITQACPKVSFEPIPIHYCAPAGFAILKCNNKTFNGTGPCTNVSTVQCTHGIRPVVSTQLLLNGSLAEEEVVIRSVNFTDNAKTIIVQLDTSVEINCTRPNNNTRKKIRIQRGPGRAFVTIGKIGNMRQAHCNISRAKWNATLKQIDSKLREQFGNNKTIIFKQSSGGDPEIVTHSFNCGGEFFYCNSTQLFNSTWSTKGSNNTEGSDTITLPCRIKQIINMWQEVGKAMYAPPISGQIRCSSNITGLLLTRDGGNSNNESEIFRPGGGDMRDNWRSELYKYKVVKIEPLGVAPTKAKRRVVQREKRAVGIGALFLGFLGAAGSTMGAASMTLTVQARQLLSGIVQQQNNLLRAIEGQQHLLQLTVWGIKQLQARILAVERYLKDQQLLGIWGCSGKLICTTAVPWNASWSNKSLEQIWNNMTWMEWDREINNYTSLIHSLIEESQNQQEKNEQELLELDKWASLWNWFNITNWLWYIKLFIMIVGGLVGLRIVFAVLSIVNRVRQGYSPLSFQTHLPNPRGPDRPEGIEEEGGERDRDRSIRLVNGSLALIWDDLRSLCLFSYHRLRDLLLIVTRIVELLGRRGWEALKYWWNLLQYWSQELKNSAVNLLNATAIAVAEGTDRVIELVQAAYRAIRHIPRRIRQGLERILL</sequence>
<reference key="1">
    <citation type="journal article" date="1985" name="Nature">
        <title>Complete nucleotide sequence of the AIDS virus, HTLV-III.</title>
        <authorList>
            <person name="Ratner L."/>
            <person name="Haseltine W.A."/>
            <person name="Patarca R."/>
            <person name="Livak K.J."/>
            <person name="Starcich B.R."/>
            <person name="Josephs S.F."/>
            <person name="Doran E.R."/>
            <person name="Rafalski J.A."/>
            <person name="Whitehorn E.A."/>
            <person name="Baumeister K."/>
            <person name="Ivanoff L."/>
            <person name="Petteway S.R. Jr."/>
            <person name="Pearson M.L."/>
            <person name="Lautenberger J.A."/>
            <person name="Papas T.S."/>
            <person name="Ghrayeb J."/>
            <person name="Chang N.T."/>
            <person name="Gallo R.C."/>
            <person name="Wong-Staal F."/>
        </authorList>
    </citation>
    <scope>NUCLEOTIDE SEQUENCE [GENOMIC RNA]</scope>
</reference>
<reference key="2">
    <citation type="journal article" date="1999" name="J. Virol.">
        <title>Identification of CXCR4 domains that support coreceptor and chemokine receptor functions.</title>
        <authorList>
            <person name="Doranz B.J."/>
            <person name="Orsini M.J."/>
            <person name="Turner J.D."/>
            <person name="Hoffman T.L."/>
            <person name="Berson J.F."/>
            <person name="Hoxie J.A."/>
            <person name="Peiper S.C."/>
            <person name="Brass L.F."/>
            <person name="Doms R.W."/>
        </authorList>
    </citation>
    <scope>INTERACTION OF SURFACE PROTEIN GP120 WITH HUMAN CXCR4</scope>
</reference>
<reference key="3">
    <citation type="journal article" date="2003" name="APMIS">
        <title>Pathogens target DC-SIGN to influence their fate DC-SIGN functions as a pathogen receptor with broad specificity.</title>
        <authorList>
            <person name="Geijtenbeek T.B."/>
            <person name="van Kooyk Y."/>
        </authorList>
    </citation>
    <scope>REVIEW</scope>
</reference>
<reference key="4">
    <citation type="journal article" date="2003" name="Biochim. Biophys. Acta">
        <title>The HIV Env-mediated fusion reaction.</title>
        <authorList>
            <person name="Gallo S.A."/>
            <person name="Finnegan C.M."/>
            <person name="Viard M."/>
            <person name="Raviv Y."/>
            <person name="Dimitrov A."/>
            <person name="Rawat S.S."/>
            <person name="Puri A."/>
            <person name="Durell S."/>
            <person name="Blumenthal R."/>
        </authorList>
    </citation>
    <scope>REVIEW</scope>
</reference>
<reference key="5">
    <citation type="journal article" date="2005" name="Cell Death Differ.">
        <title>Mechanisms of apoptosis induction by the HIV-1 envelope.</title>
        <authorList>
            <person name="Perfettini J.-L."/>
            <person name="Castedo M."/>
            <person name="Roumier T."/>
            <person name="Andreau K."/>
            <person name="Nardacci R."/>
            <person name="Piacentini M."/>
            <person name="Kroemer G."/>
        </authorList>
    </citation>
    <scope>REVIEW</scope>
</reference>
<reference key="6">
    <citation type="journal article" date="2005" name="AIDS Res. Hum. Retroviruses">
        <title>V3: HIV's switch-hitter.</title>
        <authorList>
            <person name="Hartley O."/>
            <person name="Klasse P.J."/>
            <person name="Sattentau Q.J."/>
            <person name="Moore J.P."/>
        </authorList>
    </citation>
    <scope>REVIEW</scope>
</reference>
<reference key="7">
    <citation type="journal article" date="2005" name="Drugs">
        <title>Emerging drug targets for antiretroviral therapy.</title>
        <authorList>
            <person name="Reeves J.D."/>
            <person name="Piefer A.J."/>
        </authorList>
    </citation>
    <scope>REVIEW</scope>
</reference>
<reference key="8">
    <citation type="journal article" date="2006" name="EMBO J.">
        <title>HIV and the chemokine system: 10 years later.</title>
        <authorList>
            <person name="Lusso P."/>
        </authorList>
    </citation>
    <scope>REVIEW</scope>
</reference>
<gene>
    <name evidence="1" type="primary">env</name>
</gene>
<evidence type="ECO:0000255" key="1">
    <source>
        <dbReference type="HAMAP-Rule" id="MF_04083"/>
    </source>
</evidence>
<evidence type="ECO:0000256" key="2">
    <source>
        <dbReference type="SAM" id="MobiDB-lite"/>
    </source>
</evidence>